<geneLocation type="chloroplast"/>
<proteinExistence type="inferred from homology"/>
<keyword id="KW-0007">Acetylation</keyword>
<keyword id="KW-0148">Chlorophyll</keyword>
<keyword id="KW-0150">Chloroplast</keyword>
<keyword id="KW-0157">Chromophore</keyword>
<keyword id="KW-0249">Electron transport</keyword>
<keyword id="KW-0408">Iron</keyword>
<keyword id="KW-0460">Magnesium</keyword>
<keyword id="KW-0472">Membrane</keyword>
<keyword id="KW-0479">Metal-binding</keyword>
<keyword id="KW-0560">Oxidoreductase</keyword>
<keyword id="KW-0597">Phosphoprotein</keyword>
<keyword id="KW-0602">Photosynthesis</keyword>
<keyword id="KW-0604">Photosystem II</keyword>
<keyword id="KW-0934">Plastid</keyword>
<keyword id="KW-0793">Thylakoid</keyword>
<keyword id="KW-0812">Transmembrane</keyword>
<keyword id="KW-1133">Transmembrane helix</keyword>
<keyword id="KW-0813">Transport</keyword>
<name>PSBD_STIHE</name>
<sequence>MTITIGQYVEKRGLFDNVDDWLRRERFVFVGWSGLLLFPCAYMALGGWLTGTTFVTSWYTHGLATSYLEGCNFLTAAVSTPANSMAHSLLFLWGPEAQGDLTRWFQLGGLWPFVALHGAFSLIGFMLRQFEIAQSLKLRPYNAIAFSAPIAVFVSVFLIYPLGQAGWFFAPSFGVAAIFRFILFFQGFHNWTLNPFHMMGVAGVLGAALLCAIHGATVENTLFEDGDGANTFRAFNPTQAEETYSMVTANRFWSQIFGVAFSNKRWLHFFMLFVPVTGLWMSAIGVVGLALNLRAYDFVSQEIRAAEDPEFETFYTKNILLNEGIRAWMAAQDQPHEKLTFPEEVLPRGNAL</sequence>
<reference key="1">
    <citation type="journal article" date="2006" name="Mol. Genet. Genomics">
        <title>Distinctive architecture of the chloroplast genome in the chlorophycean green alga Stigeoclonium helveticum.</title>
        <authorList>
            <person name="Belanger A.-S."/>
            <person name="Brouard J.-S."/>
            <person name="Charlebois P."/>
            <person name="Otis C."/>
            <person name="Lemieux C."/>
            <person name="Turmel M."/>
        </authorList>
    </citation>
    <scope>NUCLEOTIDE SEQUENCE [LARGE SCALE GENOMIC DNA]</scope>
    <source>
        <strain>UTEX 441</strain>
    </source>
</reference>
<accession>Q06SH5</accession>
<organism>
    <name type="scientific">Stigeoclonium helveticum</name>
    <name type="common">Green alga</name>
    <dbReference type="NCBI Taxonomy" id="55999"/>
    <lineage>
        <taxon>Eukaryota</taxon>
        <taxon>Viridiplantae</taxon>
        <taxon>Chlorophyta</taxon>
        <taxon>core chlorophytes</taxon>
        <taxon>Chlorophyceae</taxon>
        <taxon>OCC clade</taxon>
        <taxon>Chaetophorales</taxon>
        <taxon>Chaetophoraceae</taxon>
        <taxon>Stigeoclonium</taxon>
    </lineage>
</organism>
<dbReference type="EC" id="1.10.3.9" evidence="2"/>
<dbReference type="EMBL" id="DQ630521">
    <property type="protein sequence ID" value="ABF60169.1"/>
    <property type="molecule type" value="Genomic_DNA"/>
</dbReference>
<dbReference type="RefSeq" id="YP_764391.1">
    <property type="nucleotide sequence ID" value="NC_008372.1"/>
</dbReference>
<dbReference type="SMR" id="Q06SH5"/>
<dbReference type="GeneID" id="4308412"/>
<dbReference type="GO" id="GO:0009535">
    <property type="term" value="C:chloroplast thylakoid membrane"/>
    <property type="evidence" value="ECO:0007669"/>
    <property type="project" value="UniProtKB-SubCell"/>
</dbReference>
<dbReference type="GO" id="GO:0009523">
    <property type="term" value="C:photosystem II"/>
    <property type="evidence" value="ECO:0007669"/>
    <property type="project" value="UniProtKB-KW"/>
</dbReference>
<dbReference type="GO" id="GO:0016168">
    <property type="term" value="F:chlorophyll binding"/>
    <property type="evidence" value="ECO:0007669"/>
    <property type="project" value="UniProtKB-UniRule"/>
</dbReference>
<dbReference type="GO" id="GO:0045156">
    <property type="term" value="F:electron transporter, transferring electrons within the cyclic electron transport pathway of photosynthesis activity"/>
    <property type="evidence" value="ECO:0007669"/>
    <property type="project" value="InterPro"/>
</dbReference>
<dbReference type="GO" id="GO:0005506">
    <property type="term" value="F:iron ion binding"/>
    <property type="evidence" value="ECO:0007669"/>
    <property type="project" value="UniProtKB-UniRule"/>
</dbReference>
<dbReference type="GO" id="GO:0010242">
    <property type="term" value="F:oxygen evolving activity"/>
    <property type="evidence" value="ECO:0007669"/>
    <property type="project" value="UniProtKB-EC"/>
</dbReference>
<dbReference type="GO" id="GO:0009772">
    <property type="term" value="P:photosynthetic electron transport in photosystem II"/>
    <property type="evidence" value="ECO:0007669"/>
    <property type="project" value="InterPro"/>
</dbReference>
<dbReference type="FunFam" id="1.20.85.10:FF:000001">
    <property type="entry name" value="photosystem II D2 protein-like"/>
    <property type="match status" value="1"/>
</dbReference>
<dbReference type="Gene3D" id="1.20.85.10">
    <property type="entry name" value="Photosystem II protein D1-like"/>
    <property type="match status" value="1"/>
</dbReference>
<dbReference type="HAMAP" id="MF_01383">
    <property type="entry name" value="PSII_PsbD_D2"/>
    <property type="match status" value="1"/>
</dbReference>
<dbReference type="InterPro" id="IPR055266">
    <property type="entry name" value="D1/D2"/>
</dbReference>
<dbReference type="InterPro" id="IPR036854">
    <property type="entry name" value="Photo_II_D1/D2_sf"/>
</dbReference>
<dbReference type="InterPro" id="IPR000484">
    <property type="entry name" value="Photo_RC_L/M"/>
</dbReference>
<dbReference type="InterPro" id="IPR055265">
    <property type="entry name" value="Photo_RC_L/M_CS"/>
</dbReference>
<dbReference type="InterPro" id="IPR005868">
    <property type="entry name" value="PSII_PsbD/D2"/>
</dbReference>
<dbReference type="NCBIfam" id="TIGR01152">
    <property type="entry name" value="psbD"/>
    <property type="match status" value="1"/>
</dbReference>
<dbReference type="PANTHER" id="PTHR33149:SF12">
    <property type="entry name" value="PHOTOSYSTEM II D2 PROTEIN"/>
    <property type="match status" value="1"/>
</dbReference>
<dbReference type="PANTHER" id="PTHR33149">
    <property type="entry name" value="PHOTOSYSTEM II PROTEIN D1"/>
    <property type="match status" value="1"/>
</dbReference>
<dbReference type="Pfam" id="PF00124">
    <property type="entry name" value="Photo_RC"/>
    <property type="match status" value="1"/>
</dbReference>
<dbReference type="PRINTS" id="PR00256">
    <property type="entry name" value="REACTNCENTRE"/>
</dbReference>
<dbReference type="SUPFAM" id="SSF81483">
    <property type="entry name" value="Bacterial photosystem II reaction centre, L and M subunits"/>
    <property type="match status" value="1"/>
</dbReference>
<dbReference type="PROSITE" id="PS00244">
    <property type="entry name" value="REACTION_CENTER"/>
    <property type="match status" value="1"/>
</dbReference>
<feature type="initiator methionine" description="Removed" evidence="1">
    <location>
        <position position="1"/>
    </location>
</feature>
<feature type="chain" id="PRO_0000359698" description="Photosystem II D2 protein">
    <location>
        <begin position="2"/>
        <end position="352"/>
    </location>
</feature>
<feature type="transmembrane region" description="Helical" evidence="2">
    <location>
        <begin position="40"/>
        <end position="60"/>
    </location>
</feature>
<feature type="transmembrane region" description="Helical" evidence="2">
    <location>
        <begin position="124"/>
        <end position="140"/>
    </location>
</feature>
<feature type="transmembrane region" description="Helical" evidence="2">
    <location>
        <begin position="152"/>
        <end position="165"/>
    </location>
</feature>
<feature type="transmembrane region" description="Helical" evidence="2">
    <location>
        <begin position="207"/>
        <end position="227"/>
    </location>
</feature>
<feature type="transmembrane region" description="Helical" evidence="2">
    <location>
        <begin position="278"/>
        <end position="294"/>
    </location>
</feature>
<feature type="binding site" description="axial binding residue" evidence="2">
    <location>
        <position position="117"/>
    </location>
    <ligand>
        <name>chlorophyll a</name>
        <dbReference type="ChEBI" id="CHEBI:58416"/>
        <label>ChlzD2</label>
    </ligand>
    <ligandPart>
        <name>Mg</name>
        <dbReference type="ChEBI" id="CHEBI:25107"/>
    </ligandPart>
</feature>
<feature type="binding site" evidence="2">
    <location>
        <position position="129"/>
    </location>
    <ligand>
        <name>pheophytin a</name>
        <dbReference type="ChEBI" id="CHEBI:136840"/>
        <label>D2</label>
    </ligand>
</feature>
<feature type="binding site" evidence="2">
    <location>
        <position position="142"/>
    </location>
    <ligand>
        <name>pheophytin a</name>
        <dbReference type="ChEBI" id="CHEBI:136840"/>
        <label>D2</label>
    </ligand>
</feature>
<feature type="binding site" description="axial binding residue" evidence="2">
    <location>
        <position position="197"/>
    </location>
    <ligand>
        <name>chlorophyll a</name>
        <dbReference type="ChEBI" id="CHEBI:58416"/>
        <label>PD2</label>
    </ligand>
    <ligandPart>
        <name>Mg</name>
        <dbReference type="ChEBI" id="CHEBI:25107"/>
    </ligandPart>
</feature>
<feature type="binding site" evidence="2">
    <location>
        <position position="214"/>
    </location>
    <ligand>
        <name>a plastoquinone</name>
        <dbReference type="ChEBI" id="CHEBI:17757"/>
        <label>Q(A)</label>
    </ligand>
</feature>
<feature type="binding site" evidence="2">
    <location>
        <position position="214"/>
    </location>
    <ligand>
        <name>Fe cation</name>
        <dbReference type="ChEBI" id="CHEBI:24875"/>
        <note>ligand shared with heterodimeric partner</note>
    </ligand>
</feature>
<feature type="binding site" evidence="2">
    <location>
        <position position="261"/>
    </location>
    <ligand>
        <name>a plastoquinone</name>
        <dbReference type="ChEBI" id="CHEBI:17757"/>
        <label>Q(A)</label>
    </ligand>
</feature>
<feature type="binding site" evidence="2">
    <location>
        <position position="268"/>
    </location>
    <ligand>
        <name>Fe cation</name>
        <dbReference type="ChEBI" id="CHEBI:24875"/>
        <note>ligand shared with heterodimeric partner</note>
    </ligand>
</feature>
<feature type="modified residue" description="N-acetylthreonine" evidence="1">
    <location>
        <position position="2"/>
    </location>
</feature>
<feature type="modified residue" description="Phosphothreonine" evidence="1">
    <location>
        <position position="2"/>
    </location>
</feature>
<protein>
    <recommendedName>
        <fullName evidence="2">Photosystem II D2 protein</fullName>
        <shortName evidence="2">PSII D2 protein</shortName>
        <ecNumber evidence="2">1.10.3.9</ecNumber>
    </recommendedName>
    <alternativeName>
        <fullName evidence="2">Photosystem Q(A) protein</fullName>
    </alternativeName>
</protein>
<evidence type="ECO:0000250" key="1">
    <source>
        <dbReference type="UniProtKB" id="P56761"/>
    </source>
</evidence>
<evidence type="ECO:0000255" key="2">
    <source>
        <dbReference type="HAMAP-Rule" id="MF_01383"/>
    </source>
</evidence>
<comment type="function">
    <text evidence="2">Photosystem II (PSII) is a light-driven water:plastoquinone oxidoreductase that uses light energy to abstract electrons from H(2)O, generating O(2) and a proton gradient subsequently used for ATP formation. It consists of a core antenna complex that captures photons, and an electron transfer chain that converts photonic excitation into a charge separation. The D1/D2 (PsbA/PsbD) reaction center heterodimer binds P680, the primary electron donor of PSII as well as several subsequent electron acceptors. D2 is needed for assembly of a stable PSII complex.</text>
</comment>
<comment type="catalytic activity">
    <reaction evidence="2">
        <text>2 a plastoquinone + 4 hnu + 2 H2O = 2 a plastoquinol + O2</text>
        <dbReference type="Rhea" id="RHEA:36359"/>
        <dbReference type="Rhea" id="RHEA-COMP:9561"/>
        <dbReference type="Rhea" id="RHEA-COMP:9562"/>
        <dbReference type="ChEBI" id="CHEBI:15377"/>
        <dbReference type="ChEBI" id="CHEBI:15379"/>
        <dbReference type="ChEBI" id="CHEBI:17757"/>
        <dbReference type="ChEBI" id="CHEBI:30212"/>
        <dbReference type="ChEBI" id="CHEBI:62192"/>
        <dbReference type="EC" id="1.10.3.9"/>
    </reaction>
</comment>
<comment type="cofactor">
    <text evidence="2">The D1/D2 heterodimer binds P680, chlorophylls that are the primary electron donor of PSII, and subsequent electron acceptors. It shares a non-heme iron and each subunit binds pheophytin, quinone, additional chlorophylls, carotenoids and lipids. There is also a Cl(-1) ion associated with D1 and D2, which is required for oxygen evolution. The PSII complex binds additional chlorophylls, carotenoids and specific lipids.</text>
</comment>
<comment type="subunit">
    <text evidence="2">PSII is composed of 1 copy each of membrane proteins PsbA, PsbB, PsbC, PsbD, PsbE, PsbF, PsbH, PsbI, PsbJ, PsbK, PsbL, PsbM, PsbT, PsbX, PsbY, PsbZ, Psb30/Ycf12, at least 3 peripheral proteins of the oxygen-evolving complex and a large number of cofactors. It forms dimeric complexes.</text>
</comment>
<comment type="subcellular location">
    <subcellularLocation>
        <location evidence="2">Plastid</location>
        <location evidence="2">Chloroplast thylakoid membrane</location>
        <topology evidence="2">Multi-pass membrane protein</topology>
    </subcellularLocation>
</comment>
<comment type="miscellaneous">
    <text evidence="2">2 of the reaction center chlorophylls (ChlD1 and ChlD2) are entirely coordinated by water.</text>
</comment>
<comment type="similarity">
    <text evidence="2">Belongs to the reaction center PufL/M/PsbA/D family.</text>
</comment>
<gene>
    <name evidence="2" type="primary">psbD</name>
</gene>